<reference key="1">
    <citation type="journal article" date="2009" name="Appl. Environ. Microbiol.">
        <title>Three genomes from the phylum Acidobacteria provide insight into the lifestyles of these microorganisms in soils.</title>
        <authorList>
            <person name="Ward N.L."/>
            <person name="Challacombe J.F."/>
            <person name="Janssen P.H."/>
            <person name="Henrissat B."/>
            <person name="Coutinho P.M."/>
            <person name="Wu M."/>
            <person name="Xie G."/>
            <person name="Haft D.H."/>
            <person name="Sait M."/>
            <person name="Badger J."/>
            <person name="Barabote R.D."/>
            <person name="Bradley B."/>
            <person name="Brettin T.S."/>
            <person name="Brinkac L.M."/>
            <person name="Bruce D."/>
            <person name="Creasy T."/>
            <person name="Daugherty S.C."/>
            <person name="Davidsen T.M."/>
            <person name="DeBoy R.T."/>
            <person name="Detter J.C."/>
            <person name="Dodson R.J."/>
            <person name="Durkin A.S."/>
            <person name="Ganapathy A."/>
            <person name="Gwinn-Giglio M."/>
            <person name="Han C.S."/>
            <person name="Khouri H."/>
            <person name="Kiss H."/>
            <person name="Kothari S.P."/>
            <person name="Madupu R."/>
            <person name="Nelson K.E."/>
            <person name="Nelson W.C."/>
            <person name="Paulsen I."/>
            <person name="Penn K."/>
            <person name="Ren Q."/>
            <person name="Rosovitz M.J."/>
            <person name="Selengut J.D."/>
            <person name="Shrivastava S."/>
            <person name="Sullivan S.A."/>
            <person name="Tapia R."/>
            <person name="Thompson L.S."/>
            <person name="Watkins K.L."/>
            <person name="Yang Q."/>
            <person name="Yu C."/>
            <person name="Zafar N."/>
            <person name="Zhou L."/>
            <person name="Kuske C.R."/>
        </authorList>
    </citation>
    <scope>NUCLEOTIDE SEQUENCE [LARGE SCALE GENOMIC DNA]</scope>
    <source>
        <strain>Ellin6076</strain>
    </source>
</reference>
<keyword id="KW-0997">Cell inner membrane</keyword>
<keyword id="KW-1003">Cell membrane</keyword>
<keyword id="KW-0407">Ion channel</keyword>
<keyword id="KW-0406">Ion transport</keyword>
<keyword id="KW-0472">Membrane</keyword>
<keyword id="KW-0479">Metal-binding</keyword>
<keyword id="KW-0915">Sodium</keyword>
<keyword id="KW-0812">Transmembrane</keyword>
<keyword id="KW-1133">Transmembrane helix</keyword>
<keyword id="KW-0813">Transport</keyword>
<comment type="function">
    <text evidence="1">Fluoride-specific ion channel. Important for reducing fluoride concentration in the cell, thus reducing its toxicity.</text>
</comment>
<comment type="catalytic activity">
    <reaction evidence="1">
        <text>fluoride(in) = fluoride(out)</text>
        <dbReference type="Rhea" id="RHEA:76159"/>
        <dbReference type="ChEBI" id="CHEBI:17051"/>
    </reaction>
    <physiologicalReaction direction="left-to-right" evidence="1">
        <dbReference type="Rhea" id="RHEA:76160"/>
    </physiologicalReaction>
</comment>
<comment type="activity regulation">
    <text evidence="1">Na(+) is not transported, but it plays an essential structural role and its presence is essential for fluoride channel function.</text>
</comment>
<comment type="subcellular location">
    <subcellularLocation>
        <location evidence="1">Cell inner membrane</location>
        <topology evidence="1">Multi-pass membrane protein</topology>
    </subcellularLocation>
</comment>
<comment type="similarity">
    <text evidence="1">Belongs to the fluoride channel Fluc/FEX (TC 1.A.43) family.</text>
</comment>
<feature type="chain" id="PRO_1000081023" description="Fluoride-specific ion channel FluC">
    <location>
        <begin position="1"/>
        <end position="122"/>
    </location>
</feature>
<feature type="transmembrane region" description="Helical" evidence="1">
    <location>
        <begin position="4"/>
        <end position="24"/>
    </location>
</feature>
<feature type="transmembrane region" description="Helical" evidence="1">
    <location>
        <begin position="34"/>
        <end position="54"/>
    </location>
</feature>
<feature type="transmembrane region" description="Helical" evidence="1">
    <location>
        <begin position="66"/>
        <end position="86"/>
    </location>
</feature>
<feature type="transmembrane region" description="Helical" evidence="1">
    <location>
        <begin position="95"/>
        <end position="115"/>
    </location>
</feature>
<feature type="binding site" evidence="1">
    <location>
        <position position="74"/>
    </location>
    <ligand>
        <name>Na(+)</name>
        <dbReference type="ChEBI" id="CHEBI:29101"/>
        <note>structural</note>
    </ligand>
</feature>
<feature type="binding site" evidence="1">
    <location>
        <position position="77"/>
    </location>
    <ligand>
        <name>Na(+)</name>
        <dbReference type="ChEBI" id="CHEBI:29101"/>
        <note>structural</note>
    </ligand>
</feature>
<gene>
    <name evidence="1" type="primary">fluC</name>
    <name evidence="1" type="synonym">crcB</name>
    <name type="ordered locus">Acid_7117</name>
</gene>
<accession>Q01QP2</accession>
<evidence type="ECO:0000255" key="1">
    <source>
        <dbReference type="HAMAP-Rule" id="MF_00454"/>
    </source>
</evidence>
<name>FLUC_SOLUE</name>
<organism>
    <name type="scientific">Solibacter usitatus (strain Ellin6076)</name>
    <dbReference type="NCBI Taxonomy" id="234267"/>
    <lineage>
        <taxon>Bacteria</taxon>
        <taxon>Pseudomonadati</taxon>
        <taxon>Acidobacteriota</taxon>
        <taxon>Terriglobia</taxon>
        <taxon>Bryobacterales</taxon>
        <taxon>Solibacteraceae</taxon>
        <taxon>Candidatus Solibacter</taxon>
    </lineage>
</organism>
<dbReference type="EMBL" id="CP000473">
    <property type="protein sequence ID" value="ABJ88028.1"/>
    <property type="molecule type" value="Genomic_DNA"/>
</dbReference>
<dbReference type="SMR" id="Q01QP2"/>
<dbReference type="FunCoup" id="Q01QP2">
    <property type="interactions" value="326"/>
</dbReference>
<dbReference type="STRING" id="234267.Acid_7117"/>
<dbReference type="KEGG" id="sus:Acid_7117"/>
<dbReference type="eggNOG" id="COG0239">
    <property type="taxonomic scope" value="Bacteria"/>
</dbReference>
<dbReference type="HOGENOM" id="CLU_114342_3_2_0"/>
<dbReference type="InParanoid" id="Q01QP2"/>
<dbReference type="OrthoDB" id="9815830at2"/>
<dbReference type="GO" id="GO:0005886">
    <property type="term" value="C:plasma membrane"/>
    <property type="evidence" value="ECO:0007669"/>
    <property type="project" value="UniProtKB-SubCell"/>
</dbReference>
<dbReference type="GO" id="GO:0062054">
    <property type="term" value="F:fluoride channel activity"/>
    <property type="evidence" value="ECO:0007669"/>
    <property type="project" value="UniProtKB-UniRule"/>
</dbReference>
<dbReference type="GO" id="GO:0046872">
    <property type="term" value="F:metal ion binding"/>
    <property type="evidence" value="ECO:0007669"/>
    <property type="project" value="UniProtKB-KW"/>
</dbReference>
<dbReference type="GO" id="GO:0140114">
    <property type="term" value="P:cellular detoxification of fluoride"/>
    <property type="evidence" value="ECO:0007669"/>
    <property type="project" value="UniProtKB-UniRule"/>
</dbReference>
<dbReference type="HAMAP" id="MF_00454">
    <property type="entry name" value="FluC"/>
    <property type="match status" value="1"/>
</dbReference>
<dbReference type="InterPro" id="IPR003691">
    <property type="entry name" value="FluC"/>
</dbReference>
<dbReference type="NCBIfam" id="TIGR00494">
    <property type="entry name" value="crcB"/>
    <property type="match status" value="1"/>
</dbReference>
<dbReference type="PANTHER" id="PTHR28259">
    <property type="entry name" value="FLUORIDE EXPORT PROTEIN 1-RELATED"/>
    <property type="match status" value="1"/>
</dbReference>
<dbReference type="PANTHER" id="PTHR28259:SF1">
    <property type="entry name" value="FLUORIDE EXPORT PROTEIN 1-RELATED"/>
    <property type="match status" value="1"/>
</dbReference>
<dbReference type="Pfam" id="PF02537">
    <property type="entry name" value="CRCB"/>
    <property type="match status" value="1"/>
</dbReference>
<proteinExistence type="inferred from homology"/>
<sequence length="122" mass="13097">MKYLLIALGGGTGSLARYLLGTAITSRVGARFPIGTMVVNVSGCFAIGLAMTLLTERLQPHPYWRLALVVGFLGGYTTFSSFEWETYAAVREGGFWIGLANVLGSVTLGYAAVWFGALLARR</sequence>
<protein>
    <recommendedName>
        <fullName evidence="1">Fluoride-specific ion channel FluC</fullName>
    </recommendedName>
</protein>